<sequence>MNLKVLAVFVLCAILVVVTAERRGTETGGYKKDTLQDLKKRTHDCFDRYREAACTSDNIRLLCKTSAKYQINCKKSCGLC</sequence>
<protein>
    <recommendedName>
        <fullName evidence="5">U-actitoxin-Avd9b</fullName>
        <shortName evidence="5">U-AITX-Avd9b</shortName>
    </recommendedName>
    <alternativeName>
        <fullName evidence="4">Potassium channel toxin avtx-7</fullName>
    </alternativeName>
</protein>
<name>K1B9B_ANEVI</name>
<accession>P0DN01</accession>
<proteinExistence type="inferred from homology"/>
<feature type="signal peptide" evidence="2">
    <location>
        <begin position="1"/>
        <end position="20"/>
    </location>
</feature>
<feature type="propeptide" id="PRO_0000433741" evidence="7">
    <location>
        <begin position="21"/>
        <end position="39"/>
    </location>
</feature>
<feature type="chain" id="PRO_0000433742" description="U-actitoxin-Avd9b">
    <location>
        <begin position="42"/>
        <end position="80"/>
    </location>
</feature>
<feature type="domain" description="ShKT" evidence="3">
    <location>
        <begin position="45"/>
        <end position="80"/>
    </location>
</feature>
<feature type="region of interest" description="Crucial for binding to potassium channels" evidence="1">
    <location>
        <begin position="68"/>
        <end position="69"/>
    </location>
</feature>
<feature type="disulfide bond" evidence="3">
    <location>
        <begin position="45"/>
        <end position="80"/>
    </location>
</feature>
<feature type="disulfide bond" evidence="3">
    <location>
        <begin position="54"/>
        <end position="73"/>
    </location>
</feature>
<feature type="disulfide bond" evidence="3">
    <location>
        <begin position="63"/>
        <end position="77"/>
    </location>
</feature>
<dbReference type="EMBL" id="FK756695">
    <property type="status" value="NOT_ANNOTATED_CDS"/>
    <property type="molecule type" value="mRNA"/>
</dbReference>
<dbReference type="EMBL" id="FK756784">
    <property type="status" value="NOT_ANNOTATED_CDS"/>
    <property type="molecule type" value="mRNA"/>
</dbReference>
<dbReference type="SMR" id="P0DN01"/>
<dbReference type="GO" id="GO:0005576">
    <property type="term" value="C:extracellular region"/>
    <property type="evidence" value="ECO:0007669"/>
    <property type="project" value="UniProtKB-SubCell"/>
</dbReference>
<dbReference type="GO" id="GO:0042151">
    <property type="term" value="C:nematocyst"/>
    <property type="evidence" value="ECO:0007669"/>
    <property type="project" value="UniProtKB-SubCell"/>
</dbReference>
<dbReference type="GO" id="GO:0015459">
    <property type="term" value="F:potassium channel regulator activity"/>
    <property type="evidence" value="ECO:0007669"/>
    <property type="project" value="UniProtKB-KW"/>
</dbReference>
<dbReference type="GO" id="GO:0090729">
    <property type="term" value="F:toxin activity"/>
    <property type="evidence" value="ECO:0007669"/>
    <property type="project" value="UniProtKB-KW"/>
</dbReference>
<dbReference type="SUPFAM" id="SSF57546">
    <property type="entry name" value="Crisp domain-like"/>
    <property type="match status" value="1"/>
</dbReference>
<comment type="function">
    <text evidence="1">Inhibits voltage-gated potassium channels (Kv1/KCNA).</text>
</comment>
<comment type="subcellular location">
    <subcellularLocation>
        <location evidence="6">Secreted</location>
    </subcellularLocation>
    <subcellularLocation>
        <location evidence="6">Nematocyst</location>
    </subcellularLocation>
</comment>
<comment type="similarity">
    <text>Belongs to the sea anemone type 1 potassium channel toxin family. Type 1b subfamily.</text>
</comment>
<comment type="caution">
    <text evidence="6">Opinions are divided on whether Anemonia viridis (Forsskal, 1775) and Anemonia sulcata (Pennant, 1777) are separate species.</text>
</comment>
<organism>
    <name type="scientific">Anemonia viridis</name>
    <name type="common">Snakelocks anemone</name>
    <dbReference type="NCBI Taxonomy" id="51769"/>
    <lineage>
        <taxon>Eukaryota</taxon>
        <taxon>Metazoa</taxon>
        <taxon>Cnidaria</taxon>
        <taxon>Anthozoa</taxon>
        <taxon>Hexacorallia</taxon>
        <taxon>Actiniaria</taxon>
        <taxon>Actiniidae</taxon>
        <taxon>Anemonia</taxon>
    </lineage>
</organism>
<keyword id="KW-1015">Disulfide bond</keyword>
<keyword id="KW-0872">Ion channel impairing toxin</keyword>
<keyword id="KW-0166">Nematocyst</keyword>
<keyword id="KW-0528">Neurotoxin</keyword>
<keyword id="KW-0632">Potassium channel impairing toxin</keyword>
<keyword id="KW-0964">Secreted</keyword>
<keyword id="KW-0732">Signal</keyword>
<keyword id="KW-0800">Toxin</keyword>
<keyword id="KW-1220">Voltage-gated potassium channel impairing toxin</keyword>
<reference key="1">
    <citation type="journal article" date="2009" name="BMC Genomics">
        <title>Comprehensive EST analysis of the symbiotic sea anemone, Anemonia viridis.</title>
        <authorList>
            <person name="Sabourault C."/>
            <person name="Ganot P."/>
            <person name="Deleury E."/>
            <person name="Allemand D."/>
            <person name="Furla P."/>
        </authorList>
    </citation>
    <scope>NUCLEOTIDE SEQUENCE [MRNA]</scope>
</reference>
<reference key="2">
    <citation type="journal article" date="2011" name="BMC Genomics">
        <title>The mining of toxin-like polypeptides from EST database by single residue distribution analysis.</title>
        <authorList>
            <person name="Kozlov S."/>
            <person name="Grishin E."/>
        </authorList>
    </citation>
    <scope>NOMENCLATURE</scope>
</reference>
<reference key="3">
    <citation type="journal article" date="2012" name="Toxicon">
        <title>Development of a rational nomenclature for naming peptide and protein toxins from sea anemones.</title>
        <authorList>
            <person name="Oliveira J.S."/>
            <person name="Fuentes-Silva D."/>
            <person name="King G.F."/>
        </authorList>
    </citation>
    <scope>NOMENCLATURE</scope>
</reference>
<evidence type="ECO:0000250" key="1">
    <source>
        <dbReference type="UniProtKB" id="P29186"/>
    </source>
</evidence>
<evidence type="ECO:0000255" key="2"/>
<evidence type="ECO:0000255" key="3">
    <source>
        <dbReference type="PROSITE-ProRule" id="PRU01005"/>
    </source>
</evidence>
<evidence type="ECO:0000303" key="4">
    <source>
    </source>
</evidence>
<evidence type="ECO:0000303" key="5">
    <source>
    </source>
</evidence>
<evidence type="ECO:0000305" key="6"/>
<evidence type="ECO:0000305" key="7">
    <source>
    </source>
</evidence>